<comment type="function">
    <text evidence="1">Catalyzes the condensation of the acetyl group of acetyl-CoA with 3-methyl-2-oxobutanoate (2-ketoisovalerate) to form 3-carboxy-3-hydroxy-4-methylpentanoate (2-isopropylmalate).</text>
</comment>
<comment type="catalytic activity">
    <reaction evidence="1">
        <text>3-methyl-2-oxobutanoate + acetyl-CoA + H2O = (2S)-2-isopropylmalate + CoA + H(+)</text>
        <dbReference type="Rhea" id="RHEA:21524"/>
        <dbReference type="ChEBI" id="CHEBI:1178"/>
        <dbReference type="ChEBI" id="CHEBI:11851"/>
        <dbReference type="ChEBI" id="CHEBI:15377"/>
        <dbReference type="ChEBI" id="CHEBI:15378"/>
        <dbReference type="ChEBI" id="CHEBI:57287"/>
        <dbReference type="ChEBI" id="CHEBI:57288"/>
        <dbReference type="EC" id="2.3.3.13"/>
    </reaction>
</comment>
<comment type="cofactor">
    <cofactor evidence="1">
        <name>Mn(2+)</name>
        <dbReference type="ChEBI" id="CHEBI:29035"/>
    </cofactor>
</comment>
<comment type="pathway">
    <text evidence="1">Amino-acid biosynthesis; L-leucine biosynthesis; L-leucine from 3-methyl-2-oxobutanoate: step 1/4.</text>
</comment>
<comment type="subunit">
    <text evidence="1">Homodimer.</text>
</comment>
<comment type="subcellular location">
    <subcellularLocation>
        <location evidence="1">Cytoplasm</location>
    </subcellularLocation>
</comment>
<comment type="similarity">
    <text evidence="1">Belongs to the alpha-IPM synthase/homocitrate synthase family. LeuA type 1 subfamily.</text>
</comment>
<dbReference type="EC" id="2.3.3.13" evidence="1"/>
<dbReference type="EMBL" id="CP000947">
    <property type="protein sequence ID" value="ACA32382.1"/>
    <property type="molecule type" value="Genomic_DNA"/>
</dbReference>
<dbReference type="RefSeq" id="WP_012341544.1">
    <property type="nucleotide sequence ID" value="NC_010519.1"/>
</dbReference>
<dbReference type="SMR" id="B0USF6"/>
<dbReference type="STRING" id="228400.HSM_0717"/>
<dbReference type="GeneID" id="31487003"/>
<dbReference type="KEGG" id="hsm:HSM_0717"/>
<dbReference type="HOGENOM" id="CLU_022158_0_1_6"/>
<dbReference type="UniPathway" id="UPA00048">
    <property type="reaction ID" value="UER00070"/>
</dbReference>
<dbReference type="GO" id="GO:0005829">
    <property type="term" value="C:cytosol"/>
    <property type="evidence" value="ECO:0007669"/>
    <property type="project" value="TreeGrafter"/>
</dbReference>
<dbReference type="GO" id="GO:0003852">
    <property type="term" value="F:2-isopropylmalate synthase activity"/>
    <property type="evidence" value="ECO:0007669"/>
    <property type="project" value="UniProtKB-UniRule"/>
</dbReference>
<dbReference type="GO" id="GO:0003985">
    <property type="term" value="F:acetyl-CoA C-acetyltransferase activity"/>
    <property type="evidence" value="ECO:0007669"/>
    <property type="project" value="UniProtKB-UniRule"/>
</dbReference>
<dbReference type="GO" id="GO:0030145">
    <property type="term" value="F:manganese ion binding"/>
    <property type="evidence" value="ECO:0007669"/>
    <property type="project" value="UniProtKB-UniRule"/>
</dbReference>
<dbReference type="GO" id="GO:0009098">
    <property type="term" value="P:L-leucine biosynthetic process"/>
    <property type="evidence" value="ECO:0007669"/>
    <property type="project" value="UniProtKB-UniRule"/>
</dbReference>
<dbReference type="CDD" id="cd07940">
    <property type="entry name" value="DRE_TIM_IPMS"/>
    <property type="match status" value="1"/>
</dbReference>
<dbReference type="FunFam" id="1.10.238.260:FF:000001">
    <property type="entry name" value="2-isopropylmalate synthase"/>
    <property type="match status" value="1"/>
</dbReference>
<dbReference type="FunFam" id="3.20.20.70:FF:000010">
    <property type="entry name" value="2-isopropylmalate synthase"/>
    <property type="match status" value="1"/>
</dbReference>
<dbReference type="FunFam" id="3.30.160.270:FF:000001">
    <property type="entry name" value="2-isopropylmalate synthase"/>
    <property type="match status" value="1"/>
</dbReference>
<dbReference type="Gene3D" id="1.10.238.260">
    <property type="match status" value="1"/>
</dbReference>
<dbReference type="Gene3D" id="3.30.160.270">
    <property type="match status" value="1"/>
</dbReference>
<dbReference type="Gene3D" id="3.20.20.70">
    <property type="entry name" value="Aldolase class I"/>
    <property type="match status" value="1"/>
</dbReference>
<dbReference type="HAMAP" id="MF_01025">
    <property type="entry name" value="LeuA_type1"/>
    <property type="match status" value="1"/>
</dbReference>
<dbReference type="InterPro" id="IPR050073">
    <property type="entry name" value="2-IPM_HCS-like"/>
</dbReference>
<dbReference type="InterPro" id="IPR013709">
    <property type="entry name" value="2-isopropylmalate_synth_dimer"/>
</dbReference>
<dbReference type="InterPro" id="IPR002034">
    <property type="entry name" value="AIPM/Hcit_synth_CS"/>
</dbReference>
<dbReference type="InterPro" id="IPR013785">
    <property type="entry name" value="Aldolase_TIM"/>
</dbReference>
<dbReference type="InterPro" id="IPR054691">
    <property type="entry name" value="LeuA/HCS_post-cat"/>
</dbReference>
<dbReference type="InterPro" id="IPR036230">
    <property type="entry name" value="LeuA_allosteric_dom_sf"/>
</dbReference>
<dbReference type="InterPro" id="IPR005671">
    <property type="entry name" value="LeuA_bact_synth"/>
</dbReference>
<dbReference type="InterPro" id="IPR000891">
    <property type="entry name" value="PYR_CT"/>
</dbReference>
<dbReference type="NCBIfam" id="TIGR00973">
    <property type="entry name" value="leuA_bact"/>
    <property type="match status" value="1"/>
</dbReference>
<dbReference type="NCBIfam" id="NF002084">
    <property type="entry name" value="PRK00915.1-1"/>
    <property type="match status" value="1"/>
</dbReference>
<dbReference type="NCBIfam" id="NF002086">
    <property type="entry name" value="PRK00915.1-3"/>
    <property type="match status" value="1"/>
</dbReference>
<dbReference type="PANTHER" id="PTHR10277:SF9">
    <property type="entry name" value="2-ISOPROPYLMALATE SYNTHASE 1, CHLOROPLASTIC-RELATED"/>
    <property type="match status" value="1"/>
</dbReference>
<dbReference type="PANTHER" id="PTHR10277">
    <property type="entry name" value="HOMOCITRATE SYNTHASE-RELATED"/>
    <property type="match status" value="1"/>
</dbReference>
<dbReference type="Pfam" id="PF22617">
    <property type="entry name" value="HCS_D2"/>
    <property type="match status" value="1"/>
</dbReference>
<dbReference type="Pfam" id="PF00682">
    <property type="entry name" value="HMGL-like"/>
    <property type="match status" value="1"/>
</dbReference>
<dbReference type="Pfam" id="PF08502">
    <property type="entry name" value="LeuA_dimer"/>
    <property type="match status" value="1"/>
</dbReference>
<dbReference type="SMART" id="SM00917">
    <property type="entry name" value="LeuA_dimer"/>
    <property type="match status" value="1"/>
</dbReference>
<dbReference type="SUPFAM" id="SSF110921">
    <property type="entry name" value="2-isopropylmalate synthase LeuA, allosteric (dimerisation) domain"/>
    <property type="match status" value="1"/>
</dbReference>
<dbReference type="SUPFAM" id="SSF51569">
    <property type="entry name" value="Aldolase"/>
    <property type="match status" value="1"/>
</dbReference>
<dbReference type="PROSITE" id="PS00815">
    <property type="entry name" value="AIPM_HOMOCIT_SYNTH_1"/>
    <property type="match status" value="1"/>
</dbReference>
<dbReference type="PROSITE" id="PS00816">
    <property type="entry name" value="AIPM_HOMOCIT_SYNTH_2"/>
    <property type="match status" value="1"/>
</dbReference>
<dbReference type="PROSITE" id="PS50991">
    <property type="entry name" value="PYR_CT"/>
    <property type="match status" value="1"/>
</dbReference>
<evidence type="ECO:0000255" key="1">
    <source>
        <dbReference type="HAMAP-Rule" id="MF_01025"/>
    </source>
</evidence>
<organism>
    <name type="scientific">Histophilus somni (strain 2336)</name>
    <name type="common">Haemophilus somnus</name>
    <dbReference type="NCBI Taxonomy" id="228400"/>
    <lineage>
        <taxon>Bacteria</taxon>
        <taxon>Pseudomonadati</taxon>
        <taxon>Pseudomonadota</taxon>
        <taxon>Gammaproteobacteria</taxon>
        <taxon>Pasteurellales</taxon>
        <taxon>Pasteurellaceae</taxon>
        <taxon>Histophilus</taxon>
    </lineage>
</organism>
<keyword id="KW-0028">Amino-acid biosynthesis</keyword>
<keyword id="KW-0100">Branched-chain amino acid biosynthesis</keyword>
<keyword id="KW-0963">Cytoplasm</keyword>
<keyword id="KW-0432">Leucine biosynthesis</keyword>
<keyword id="KW-0464">Manganese</keyword>
<keyword id="KW-0479">Metal-binding</keyword>
<keyword id="KW-0808">Transferase</keyword>
<sequence length="517" mass="56367">MQNNIIIFDTTLRDGEQALKASLTVKEKLQIALALERLGVDVMEVGFPVSSAGDFESVQTIARHIKNSRVCALSRAVDKDIDIAADALKVAEAFRIHTFIATSALHVEAKLRRTFDDVVEMAIQAVKRARRYTDDVEFSCEDAGRTGVDNICRIVEAAIKAGATTVNIPDTVGFCLPTEYGNIIDQVMNRVPNIDKAVISVHCHNDLGMATANSLTAVQNGARQIECTINGIGERAGNTALEEVVMAIKTRQDIFKGLDTRINTQEIHRVSQMVSQLCNMPIQPNKAIVGSNAFAHSSGIHQDGMVKNKNTYEIMSPETIGLKKEKLNLTARSGRAAVKSHMDAMGYQQNDYDLDKLYAAFLKLADKKGQVFDYDLEALAFIDMQQGDEDRLSLDVITSQTISNLPASAFVQVELDGKKISQVSNGGNGPVDAVYNAILAITDMDITMLHYNLTAKGEGAEALGQVDIVVEHKGRRFHGVGLATDIVESSARALIHAINAIYRANKVADLKSHKISQ</sequence>
<accession>B0USF6</accession>
<gene>
    <name evidence="1" type="primary">leuA</name>
    <name type="ordered locus">HSM_0717</name>
</gene>
<protein>
    <recommendedName>
        <fullName evidence="1">2-isopropylmalate synthase</fullName>
        <ecNumber evidence="1">2.3.3.13</ecNumber>
    </recommendedName>
    <alternativeName>
        <fullName evidence="1">Alpha-IPM synthase</fullName>
    </alternativeName>
    <alternativeName>
        <fullName evidence="1">Alpha-isopropylmalate synthase</fullName>
    </alternativeName>
</protein>
<reference key="1">
    <citation type="submission" date="2008-02" db="EMBL/GenBank/DDBJ databases">
        <title>Complete sequence of Haemophilus somnus 2336.</title>
        <authorList>
            <consortium name="US DOE Joint Genome Institute"/>
            <person name="Siddaramappa S."/>
            <person name="Duncan A.J."/>
            <person name="Challacombe J.F."/>
            <person name="Rainey D."/>
            <person name="Gillaspy A.F."/>
            <person name="Carson M."/>
            <person name="Gipson J."/>
            <person name="Gipson M."/>
            <person name="Bruce D."/>
            <person name="Detter J.C."/>
            <person name="Han C.S."/>
            <person name="Land M."/>
            <person name="Tapia R."/>
            <person name="Thompson L.S."/>
            <person name="Orvis J."/>
            <person name="Zaitshik J."/>
            <person name="Barnes G."/>
            <person name="Brettin T.S."/>
            <person name="Dyer D.W."/>
            <person name="Inzana T.J."/>
        </authorList>
    </citation>
    <scope>NUCLEOTIDE SEQUENCE [LARGE SCALE GENOMIC DNA]</scope>
    <source>
        <strain>2336</strain>
    </source>
</reference>
<proteinExistence type="inferred from homology"/>
<feature type="chain" id="PRO_1000149208" description="2-isopropylmalate synthase">
    <location>
        <begin position="1"/>
        <end position="517"/>
    </location>
</feature>
<feature type="domain" description="Pyruvate carboxyltransferase" evidence="1">
    <location>
        <begin position="5"/>
        <end position="268"/>
    </location>
</feature>
<feature type="region of interest" description="Regulatory domain" evidence="1">
    <location>
        <begin position="393"/>
        <end position="517"/>
    </location>
</feature>
<feature type="binding site" evidence="1">
    <location>
        <position position="14"/>
    </location>
    <ligand>
        <name>Mn(2+)</name>
        <dbReference type="ChEBI" id="CHEBI:29035"/>
    </ligand>
</feature>
<feature type="binding site" evidence="1">
    <location>
        <position position="202"/>
    </location>
    <ligand>
        <name>Mn(2+)</name>
        <dbReference type="ChEBI" id="CHEBI:29035"/>
    </ligand>
</feature>
<feature type="binding site" evidence="1">
    <location>
        <position position="204"/>
    </location>
    <ligand>
        <name>Mn(2+)</name>
        <dbReference type="ChEBI" id="CHEBI:29035"/>
    </ligand>
</feature>
<feature type="binding site" evidence="1">
    <location>
        <position position="238"/>
    </location>
    <ligand>
        <name>Mn(2+)</name>
        <dbReference type="ChEBI" id="CHEBI:29035"/>
    </ligand>
</feature>
<name>LEU1_HISS2</name>